<dbReference type="EMBL" id="CR378671">
    <property type="protein sequence ID" value="CAG20964.1"/>
    <property type="molecule type" value="Genomic_DNA"/>
</dbReference>
<dbReference type="RefSeq" id="WP_011219244.1">
    <property type="nucleotide sequence ID" value="NC_006370.1"/>
</dbReference>
<dbReference type="SMR" id="Q6LP12"/>
<dbReference type="STRING" id="298386.PBPRA2585"/>
<dbReference type="KEGG" id="ppr:PBPRA2585"/>
<dbReference type="eggNOG" id="COG3081">
    <property type="taxonomic scope" value="Bacteria"/>
</dbReference>
<dbReference type="HOGENOM" id="CLU_063050_0_1_6"/>
<dbReference type="Proteomes" id="UP000000593">
    <property type="component" value="Chromosome 1"/>
</dbReference>
<dbReference type="GO" id="GO:0043590">
    <property type="term" value="C:bacterial nucleoid"/>
    <property type="evidence" value="ECO:0007669"/>
    <property type="project" value="TreeGrafter"/>
</dbReference>
<dbReference type="GO" id="GO:0005737">
    <property type="term" value="C:cytoplasm"/>
    <property type="evidence" value="ECO:0007669"/>
    <property type="project" value="UniProtKB-UniRule"/>
</dbReference>
<dbReference type="GO" id="GO:0003690">
    <property type="term" value="F:double-stranded DNA binding"/>
    <property type="evidence" value="ECO:0007669"/>
    <property type="project" value="TreeGrafter"/>
</dbReference>
<dbReference type="GO" id="GO:0003727">
    <property type="term" value="F:single-stranded RNA binding"/>
    <property type="evidence" value="ECO:0007669"/>
    <property type="project" value="TreeGrafter"/>
</dbReference>
<dbReference type="HAMAP" id="MF_00730">
    <property type="entry name" value="NdpA"/>
    <property type="match status" value="1"/>
</dbReference>
<dbReference type="InterPro" id="IPR007358">
    <property type="entry name" value="Nucleoid_associated_NdpA"/>
</dbReference>
<dbReference type="NCBIfam" id="NF001557">
    <property type="entry name" value="PRK00378.1"/>
    <property type="match status" value="1"/>
</dbReference>
<dbReference type="PANTHER" id="PTHR38772">
    <property type="match status" value="1"/>
</dbReference>
<dbReference type="PANTHER" id="PTHR38772:SF1">
    <property type="entry name" value="NUCLEOID-ASSOCIATED PROTEIN YEJK"/>
    <property type="match status" value="1"/>
</dbReference>
<dbReference type="Pfam" id="PF04245">
    <property type="entry name" value="NA37"/>
    <property type="match status" value="1"/>
</dbReference>
<proteinExistence type="inferred from homology"/>
<feature type="chain" id="PRO_0000210912" description="Nucleoid-associated protein PBPRA2585">
    <location>
        <begin position="1"/>
        <end position="337"/>
    </location>
</feature>
<gene>
    <name type="ordered locus">PBPRA2585</name>
</gene>
<accession>Q6LP12</accession>
<protein>
    <recommendedName>
        <fullName evidence="1">Nucleoid-associated protein PBPRA2585</fullName>
    </recommendedName>
</protein>
<evidence type="ECO:0000255" key="1">
    <source>
        <dbReference type="HAMAP-Rule" id="MF_00730"/>
    </source>
</evidence>
<keyword id="KW-0963">Cytoplasm</keyword>
<keyword id="KW-1185">Reference proteome</keyword>
<organism>
    <name type="scientific">Photobacterium profundum (strain SS9)</name>
    <dbReference type="NCBI Taxonomy" id="298386"/>
    <lineage>
        <taxon>Bacteria</taxon>
        <taxon>Pseudomonadati</taxon>
        <taxon>Pseudomonadota</taxon>
        <taxon>Gammaproteobacteria</taxon>
        <taxon>Vibrionales</taxon>
        <taxon>Vibrionaceae</taxon>
        <taxon>Photobacterium</taxon>
    </lineage>
</organism>
<reference key="1">
    <citation type="journal article" date="2005" name="Science">
        <title>Life at depth: Photobacterium profundum genome sequence and expression analysis.</title>
        <authorList>
            <person name="Vezzi A."/>
            <person name="Campanaro S."/>
            <person name="D'Angelo M."/>
            <person name="Simonato F."/>
            <person name="Vitulo N."/>
            <person name="Lauro F.M."/>
            <person name="Cestaro A."/>
            <person name="Malacrida G."/>
            <person name="Simionati B."/>
            <person name="Cannata N."/>
            <person name="Romualdi C."/>
            <person name="Bartlett D.H."/>
            <person name="Valle G."/>
        </authorList>
    </citation>
    <scope>NUCLEOTIDE SEQUENCE [LARGE SCALE GENOMIC DNA]</scope>
    <source>
        <strain>ATCC BAA-1253 / SS9</strain>
    </source>
</reference>
<sequence length="337" mass="38070">MSLTLSNVILHQLTKNDQDEIEINLRNQVLDADSSTEGLVAELHRVYSSKGAKGFALFAEDSEFCHWLKQYRTGEMDFVTFSNQSAQRLQVELAKYPFAEAGTLVMAEYQSLATDYLFIGLLPTCHSMKVTEQLDISATDYLDVAKMDIVARIDLSSWETNSDSNRYLTFIKGRVGRKISDFFLDFLQAVVGLDAKEQNQVLMQAVEDFCADSRLDKEEKQQYRKQVYDYCNGQLQAGDEVAVKELAGELPPAEDGTNFYEFTSKQGYELEESFPADRTAMRKLTKFVGAGGGMSINFDSMLLGERIFYDAETDTLTIKGTPPNLKDQLLRRLNTDN</sequence>
<name>NDPA_PHOPR</name>
<comment type="subcellular location">
    <subcellularLocation>
        <location evidence="1">Cytoplasm</location>
        <location evidence="1">Nucleoid</location>
    </subcellularLocation>
</comment>
<comment type="similarity">
    <text evidence="1">Belongs to the YejK family.</text>
</comment>